<accession>P04230</accession>
<accession>O78226</accession>
<comment type="subcellular location">
    <subcellularLocation>
        <location evidence="5">Membrane</location>
        <topology evidence="5">Single-pass type I membrane protein</topology>
    </subcellularLocation>
</comment>
<comment type="PTM">
    <text evidence="3 4">Ubiquitinated in immature dendritic cells leading to down-regulation of MHC class II.</text>
</comment>
<comment type="similarity">
    <text evidence="5">Belongs to the MHC class II family.</text>
</comment>
<gene>
    <name type="primary">H2-Eb1</name>
</gene>
<reference key="1">
    <citation type="journal article" date="1984" name="EMBO J.">
        <title>The nucleotide sequence of the murine I-E beta b immune response gene: evidence for gene conversion events in class II genes of the major histocompatibility complex.</title>
        <authorList>
            <person name="Widera G."/>
            <person name="Flavell R.A."/>
        </authorList>
    </citation>
    <scope>NUCLEOTIDE SEQUENCE [GENOMIC DNA]</scope>
    <source>
        <strain>C57BL/10</strain>
    </source>
</reference>
<reference key="2">
    <citation type="journal article" date="1988" name="J. Immunogenet.">
        <title>Complete coding region sequence of E beta k cDNA clones: lack of polymorphism in the NH2-terminus between E beta k and E beta b molecules.</title>
        <authorList>
            <person name="King L.B."/>
            <person name="Sharma S."/>
            <person name="Corley R.B."/>
        </authorList>
    </citation>
    <scope>NUCLEOTIDE SEQUENCE</scope>
</reference>
<reference key="3">
    <citation type="journal article" date="1987" name="Genet. Res.">
        <title>Nucleotide sequence analysis of class II genes borne by mouse t chromosomes.</title>
        <authorList>
            <person name="Golubic M."/>
            <person name="Budimir O."/>
            <person name="Schoepfer R."/>
            <person name="Kasahara M."/>
            <person name="Mayer W.E."/>
            <person name="Figueroa F."/>
            <person name="Klein J."/>
        </authorList>
    </citation>
    <scope>NUCLEOTIDE SEQUENCE OF 113-121</scope>
</reference>
<reference key="4">
    <citation type="journal article" date="2006" name="Immunity">
        <title>Dendritic cells regulate exposure of MHC class II at their plasma membrane by oligoubiquitination.</title>
        <authorList>
            <person name="van Niel G."/>
            <person name="Wubbolts R."/>
            <person name="Ten Broeke T."/>
            <person name="Buschow S.I."/>
            <person name="Ossendorp F.A."/>
            <person name="Melief C.J."/>
            <person name="Raposo G."/>
            <person name="van Balkom B.W."/>
            <person name="Stoorvogel W."/>
        </authorList>
    </citation>
    <scope>UBIQUITINATION</scope>
</reference>
<reference key="5">
    <citation type="journal article" date="2006" name="Nature">
        <title>Surface expression of MHC class II in dendritic cells is controlled by regulated ubiquitination.</title>
        <authorList>
            <person name="Shin J.S."/>
            <person name="Ebersold M."/>
            <person name="Pypaert M."/>
            <person name="Delamarre L."/>
            <person name="Hartley A."/>
            <person name="Mellman I."/>
        </authorList>
    </citation>
    <scope>UBIQUITINATION</scope>
</reference>
<dbReference type="EMBL" id="X00623">
    <property type="protein sequence ID" value="CAA25257.1"/>
    <property type="molecule type" value="Genomic_DNA"/>
</dbReference>
<dbReference type="EMBL" id="X00701">
    <property type="protein sequence ID" value="CAB51615.2"/>
    <property type="status" value="ALT_SEQ"/>
    <property type="molecule type" value="Genomic_DNA"/>
</dbReference>
<dbReference type="EMBL" id="X00702">
    <property type="protein sequence ID" value="CAB51615.2"/>
    <property type="status" value="JOINED"/>
    <property type="molecule type" value="Genomic_DNA"/>
</dbReference>
<dbReference type="EMBL" id="M36940">
    <property type="protein sequence ID" value="AAA39590.1"/>
    <property type="molecule type" value="mRNA"/>
</dbReference>
<dbReference type="EMBL" id="L38590">
    <property type="protein sequence ID" value="AAA57294.1"/>
    <property type="molecule type" value="Genomic_DNA"/>
</dbReference>
<dbReference type="CCDS" id="CCDS37584.1"/>
<dbReference type="PIR" id="A02226">
    <property type="entry name" value="HLMSE1"/>
</dbReference>
<dbReference type="PDB" id="1I3R">
    <property type="method" value="X-ray"/>
    <property type="resolution" value="2.40 A"/>
    <property type="chains" value="B/D/F/H=30-225"/>
</dbReference>
<dbReference type="PDB" id="1KT2">
    <property type="method" value="X-ray"/>
    <property type="resolution" value="2.80 A"/>
    <property type="chains" value="B/D=30-215"/>
</dbReference>
<dbReference type="PDB" id="1KTD">
    <property type="method" value="X-ray"/>
    <property type="resolution" value="2.40 A"/>
    <property type="chains" value="B/D=30-215"/>
</dbReference>
<dbReference type="PDB" id="3QIB">
    <property type="method" value="X-ray"/>
    <property type="resolution" value="2.70 A"/>
    <property type="chains" value="B=30-225"/>
</dbReference>
<dbReference type="PDB" id="3QIU">
    <property type="method" value="X-ray"/>
    <property type="resolution" value="2.70 A"/>
    <property type="chains" value="B=30-225"/>
</dbReference>
<dbReference type="PDB" id="3QIW">
    <property type="method" value="X-ray"/>
    <property type="resolution" value="3.30 A"/>
    <property type="chains" value="B=30-225"/>
</dbReference>
<dbReference type="PDBsum" id="1I3R"/>
<dbReference type="PDBsum" id="1KT2"/>
<dbReference type="PDBsum" id="1KTD"/>
<dbReference type="PDBsum" id="3QIB"/>
<dbReference type="PDBsum" id="3QIU"/>
<dbReference type="PDBsum" id="3QIW"/>
<dbReference type="SMR" id="P04230"/>
<dbReference type="FunCoup" id="P04230">
    <property type="interactions" value="157"/>
</dbReference>
<dbReference type="STRING" id="10090.ENSMUSP00000158533"/>
<dbReference type="GlyCosmos" id="P04230">
    <property type="glycosylation" value="1 site, No reported glycans"/>
</dbReference>
<dbReference type="GlyGen" id="P04230">
    <property type="glycosylation" value="2 sites, 1 N-linked glycan (1 site), 1 O-linked glycan (1 site)"/>
</dbReference>
<dbReference type="iPTMnet" id="P04230"/>
<dbReference type="PhosphoSitePlus" id="P04230"/>
<dbReference type="PaxDb" id="10090-ENSMUSP00000074143"/>
<dbReference type="ProteomicsDB" id="269676"/>
<dbReference type="AGR" id="MGI:95901"/>
<dbReference type="MGI" id="MGI:95901">
    <property type="gene designation" value="H2-Eb1"/>
</dbReference>
<dbReference type="eggNOG" id="ENOG502RYBQ">
    <property type="taxonomic scope" value="Eukaryota"/>
</dbReference>
<dbReference type="InParanoid" id="P04230"/>
<dbReference type="OrthoDB" id="9940220at2759"/>
<dbReference type="PhylomeDB" id="P04230"/>
<dbReference type="Reactome" id="R-MMU-202424">
    <property type="pathway name" value="Downstream TCR signaling"/>
</dbReference>
<dbReference type="Reactome" id="R-MMU-202427">
    <property type="pathway name" value="Phosphorylation of CD3 and TCR zeta chains"/>
</dbReference>
<dbReference type="Reactome" id="R-MMU-202430">
    <property type="pathway name" value="Translocation of ZAP-70 to Immunological synapse"/>
</dbReference>
<dbReference type="Reactome" id="R-MMU-202433">
    <property type="pathway name" value="Generation of second messenger molecules"/>
</dbReference>
<dbReference type="Reactome" id="R-MMU-2132295">
    <property type="pathway name" value="MHC class II antigen presentation"/>
</dbReference>
<dbReference type="Reactome" id="R-MMU-389948">
    <property type="pathway name" value="Co-inhibition by PD-1"/>
</dbReference>
<dbReference type="ChiTaRS" id="H2-Eb1">
    <property type="organism name" value="mouse"/>
</dbReference>
<dbReference type="EvolutionaryTrace" id="P04230"/>
<dbReference type="Proteomes" id="UP000000589">
    <property type="component" value="Unplaced"/>
</dbReference>
<dbReference type="RNAct" id="P04230">
    <property type="molecule type" value="protein"/>
</dbReference>
<dbReference type="GO" id="GO:0042613">
    <property type="term" value="C:MHC class II protein complex"/>
    <property type="evidence" value="ECO:0007669"/>
    <property type="project" value="UniProtKB-KW"/>
</dbReference>
<dbReference type="GO" id="GO:0002250">
    <property type="term" value="P:adaptive immune response"/>
    <property type="evidence" value="ECO:0007669"/>
    <property type="project" value="UniProtKB-KW"/>
</dbReference>
<dbReference type="GO" id="GO:0019886">
    <property type="term" value="P:antigen processing and presentation of exogenous peptide antigen via MHC class II"/>
    <property type="evidence" value="ECO:0000314"/>
    <property type="project" value="MGI"/>
</dbReference>
<dbReference type="CDD" id="cd20998">
    <property type="entry name" value="IgC1_MHC_II_beta_I-E"/>
    <property type="match status" value="1"/>
</dbReference>
<dbReference type="FunFam" id="2.60.40.10:FF:000116">
    <property type="entry name" value="HLA class II histocompatibility antigen, DRB1-1 beta chain"/>
    <property type="match status" value="1"/>
</dbReference>
<dbReference type="FunFam" id="3.10.320.10:FF:000001">
    <property type="entry name" value="HLA class II histocompatibility antigen, DRB1-1 beta chain"/>
    <property type="match status" value="1"/>
</dbReference>
<dbReference type="Gene3D" id="3.10.320.10">
    <property type="entry name" value="Class II Histocompatibility Antigen, M Beta Chain, Chain B, domain 1"/>
    <property type="match status" value="1"/>
</dbReference>
<dbReference type="Gene3D" id="2.60.40.10">
    <property type="entry name" value="Immunoglobulins"/>
    <property type="match status" value="1"/>
</dbReference>
<dbReference type="InterPro" id="IPR007110">
    <property type="entry name" value="Ig-like_dom"/>
</dbReference>
<dbReference type="InterPro" id="IPR036179">
    <property type="entry name" value="Ig-like_dom_sf"/>
</dbReference>
<dbReference type="InterPro" id="IPR013783">
    <property type="entry name" value="Ig-like_fold"/>
</dbReference>
<dbReference type="InterPro" id="IPR003006">
    <property type="entry name" value="Ig/MHC_CS"/>
</dbReference>
<dbReference type="InterPro" id="IPR003597">
    <property type="entry name" value="Ig_C1-set"/>
</dbReference>
<dbReference type="InterPro" id="IPR050160">
    <property type="entry name" value="MHC/Immunoglobulin"/>
</dbReference>
<dbReference type="InterPro" id="IPR011162">
    <property type="entry name" value="MHC_I/II-like_Ag-recog"/>
</dbReference>
<dbReference type="InterPro" id="IPR014745">
    <property type="entry name" value="MHC_II_a/b_N"/>
</dbReference>
<dbReference type="InterPro" id="IPR000353">
    <property type="entry name" value="MHC_II_b_N"/>
</dbReference>
<dbReference type="PANTHER" id="PTHR19944:SF99">
    <property type="entry name" value="HLA CLASS II HISTOCOMPATIBILITY ANTIGEN, DRB1 BETA CHAIN"/>
    <property type="match status" value="1"/>
</dbReference>
<dbReference type="PANTHER" id="PTHR19944">
    <property type="entry name" value="MHC CLASS II-RELATED"/>
    <property type="match status" value="1"/>
</dbReference>
<dbReference type="Pfam" id="PF07654">
    <property type="entry name" value="C1-set"/>
    <property type="match status" value="1"/>
</dbReference>
<dbReference type="Pfam" id="PF00969">
    <property type="entry name" value="MHC_II_beta"/>
    <property type="match status" value="1"/>
</dbReference>
<dbReference type="SMART" id="SM00407">
    <property type="entry name" value="IGc1"/>
    <property type="match status" value="1"/>
</dbReference>
<dbReference type="SMART" id="SM00921">
    <property type="entry name" value="MHC_II_beta"/>
    <property type="match status" value="1"/>
</dbReference>
<dbReference type="SUPFAM" id="SSF48726">
    <property type="entry name" value="Immunoglobulin"/>
    <property type="match status" value="1"/>
</dbReference>
<dbReference type="SUPFAM" id="SSF54452">
    <property type="entry name" value="MHC antigen-recognition domain"/>
    <property type="match status" value="1"/>
</dbReference>
<dbReference type="PROSITE" id="PS50835">
    <property type="entry name" value="IG_LIKE"/>
    <property type="match status" value="1"/>
</dbReference>
<dbReference type="PROSITE" id="PS00290">
    <property type="entry name" value="IG_MHC"/>
    <property type="match status" value="1"/>
</dbReference>
<evidence type="ECO:0000255" key="1"/>
<evidence type="ECO:0000255" key="2">
    <source>
        <dbReference type="PROSITE-ProRule" id="PRU00114"/>
    </source>
</evidence>
<evidence type="ECO:0000269" key="3">
    <source>
    </source>
</evidence>
<evidence type="ECO:0000269" key="4">
    <source>
    </source>
</evidence>
<evidence type="ECO:0000305" key="5"/>
<evidence type="ECO:0007829" key="6">
    <source>
        <dbReference type="PDB" id="1I3R"/>
    </source>
</evidence>
<keyword id="KW-0002">3D-structure</keyword>
<keyword id="KW-1064">Adaptive immunity</keyword>
<keyword id="KW-1015">Disulfide bond</keyword>
<keyword id="KW-0325">Glycoprotein</keyword>
<keyword id="KW-0391">Immunity</keyword>
<keyword id="KW-0472">Membrane</keyword>
<keyword id="KW-0491">MHC II</keyword>
<keyword id="KW-1185">Reference proteome</keyword>
<keyword id="KW-0732">Signal</keyword>
<keyword id="KW-0812">Transmembrane</keyword>
<keyword id="KW-1133">Transmembrane helix</keyword>
<keyword id="KW-0832">Ubl conjugation</keyword>
<organism>
    <name type="scientific">Mus musculus</name>
    <name type="common">Mouse</name>
    <dbReference type="NCBI Taxonomy" id="10090"/>
    <lineage>
        <taxon>Eukaryota</taxon>
        <taxon>Metazoa</taxon>
        <taxon>Chordata</taxon>
        <taxon>Craniata</taxon>
        <taxon>Vertebrata</taxon>
        <taxon>Euteleostomi</taxon>
        <taxon>Mammalia</taxon>
        <taxon>Eutheria</taxon>
        <taxon>Euarchontoglires</taxon>
        <taxon>Glires</taxon>
        <taxon>Rodentia</taxon>
        <taxon>Myomorpha</taxon>
        <taxon>Muroidea</taxon>
        <taxon>Muridae</taxon>
        <taxon>Murinae</taxon>
        <taxon>Mus</taxon>
        <taxon>Mus</taxon>
    </lineage>
</organism>
<proteinExistence type="evidence at protein level"/>
<feature type="signal peptide">
    <location>
        <begin position="1"/>
        <end position="26"/>
    </location>
</feature>
<feature type="chain" id="PRO_0000019000" description="H-2 class II histocompatibility antigen, E-B beta chain">
    <location>
        <begin position="27"/>
        <end position="264"/>
    </location>
</feature>
<feature type="topological domain" description="Extracellular" evidence="1">
    <location>
        <begin position="27"/>
        <end position="225"/>
    </location>
</feature>
<feature type="transmembrane region" description="Helical" evidence="1">
    <location>
        <begin position="226"/>
        <end position="246"/>
    </location>
</feature>
<feature type="topological domain" description="Cytoplasmic" evidence="1">
    <location>
        <begin position="247"/>
        <end position="264"/>
    </location>
</feature>
<feature type="domain" description="Ig-like C1-type">
    <location>
        <begin position="124"/>
        <end position="214"/>
    </location>
</feature>
<feature type="region of interest" description="Beta-1">
    <location>
        <begin position="27"/>
        <end position="121"/>
    </location>
</feature>
<feature type="region of interest" description="Beta-2">
    <location>
        <begin position="122"/>
        <end position="225"/>
    </location>
</feature>
<feature type="glycosylation site" description="N-linked (GlcNAc...) asparagine" evidence="1">
    <location>
        <position position="46"/>
    </location>
</feature>
<feature type="disulfide bond" evidence="2">
    <location>
        <begin position="38"/>
        <end position="106"/>
    </location>
</feature>
<feature type="disulfide bond" evidence="2">
    <location>
        <begin position="144"/>
        <end position="200"/>
    </location>
</feature>
<feature type="strand" evidence="6">
    <location>
        <begin position="34"/>
        <end position="45"/>
    </location>
</feature>
<feature type="helix" evidence="6">
    <location>
        <begin position="47"/>
        <end position="49"/>
    </location>
</feature>
<feature type="strand" evidence="6">
    <location>
        <begin position="50"/>
        <end position="59"/>
    </location>
</feature>
<feature type="strand" evidence="6">
    <location>
        <begin position="62"/>
        <end position="68"/>
    </location>
</feature>
<feature type="turn" evidence="6">
    <location>
        <begin position="69"/>
        <end position="71"/>
    </location>
</feature>
<feature type="strand" evidence="6">
    <location>
        <begin position="73"/>
        <end position="78"/>
    </location>
</feature>
<feature type="helix" evidence="6">
    <location>
        <begin position="79"/>
        <end position="81"/>
    </location>
</feature>
<feature type="helix" evidence="6">
    <location>
        <begin position="82"/>
        <end position="89"/>
    </location>
</feature>
<feature type="helix" evidence="6">
    <location>
        <begin position="92"/>
        <end position="104"/>
    </location>
</feature>
<feature type="helix" evidence="6">
    <location>
        <begin position="106"/>
        <end position="113"/>
    </location>
</feature>
<feature type="turn" evidence="6">
    <location>
        <begin position="114"/>
        <end position="119"/>
    </location>
</feature>
<feature type="strand" evidence="6">
    <location>
        <begin position="125"/>
        <end position="130"/>
    </location>
</feature>
<feature type="strand" evidence="6">
    <location>
        <begin position="134"/>
        <end position="136"/>
    </location>
</feature>
<feature type="strand" evidence="6">
    <location>
        <begin position="141"/>
        <end position="152"/>
    </location>
</feature>
<feature type="strand" evidence="6">
    <location>
        <begin position="155"/>
        <end position="160"/>
    </location>
</feature>
<feature type="strand" evidence="6">
    <location>
        <begin position="163"/>
        <end position="165"/>
    </location>
</feature>
<feature type="strand" evidence="6">
    <location>
        <begin position="167"/>
        <end position="171"/>
    </location>
</feature>
<feature type="strand" evidence="6">
    <location>
        <begin position="178"/>
        <end position="180"/>
    </location>
</feature>
<feature type="strand" evidence="6">
    <location>
        <begin position="182"/>
        <end position="189"/>
    </location>
</feature>
<feature type="strand" evidence="6">
    <location>
        <begin position="197"/>
        <end position="203"/>
    </location>
</feature>
<feature type="strand" evidence="6">
    <location>
        <begin position="211"/>
        <end position="216"/>
    </location>
</feature>
<name>HB21_MOUSE</name>
<protein>
    <recommendedName>
        <fullName>H-2 class II histocompatibility antigen, E-B beta chain</fullName>
    </recommendedName>
</protein>
<sequence length="264" mass="30166">MVWLPRVPCVAAVILLLTVLSPPMALVRDSRPWFLEYCKSECHFYNGTQRVRLLERYFYNLEENLRFDSDVGEFHAVTELGRPDAENWNSQPEFLEQKRAEVDTVCRHNYEISDKFLVRRRVEPTVTVYPTKTQPLEHHNLLVCSVSDFYPGNIEVRWFRNGKEEKTGIVSTGLVRNGDWTFQTLVMLETVPQSGEVYTCQVEHPSLTDPVTVEWKAQSTSAQNKMLSGVGGFVLGLLFLGAGLFIYFRNQKGQSGLQPTGLLS</sequence>